<organism>
    <name type="scientific">Burkholderia multivorans (strain ATCC 17616 / 249)</name>
    <dbReference type="NCBI Taxonomy" id="395019"/>
    <lineage>
        <taxon>Bacteria</taxon>
        <taxon>Pseudomonadati</taxon>
        <taxon>Pseudomonadota</taxon>
        <taxon>Betaproteobacteria</taxon>
        <taxon>Burkholderiales</taxon>
        <taxon>Burkholderiaceae</taxon>
        <taxon>Burkholderia</taxon>
        <taxon>Burkholderia cepacia complex</taxon>
    </lineage>
</organism>
<keyword id="KW-0521">NADP</keyword>
<keyword id="KW-0560">Oxidoreductase</keyword>
<keyword id="KW-1185">Reference proteome</keyword>
<protein>
    <recommendedName>
        <fullName>Delta(1)-pyrroline-2-carboxylate reductase 1</fullName>
        <shortName>Pyr2C reductase 1</shortName>
        <ecNumber evidence="1">1.5.1.49</ecNumber>
    </recommendedName>
    <alternativeName>
        <fullName evidence="2">Proline ketimine reductase 1</fullName>
    </alternativeName>
</protein>
<feature type="chain" id="PRO_0000432303" description="Delta(1)-pyrroline-2-carboxylate reductase 1">
    <location>
        <begin position="1"/>
        <end position="310"/>
    </location>
</feature>
<sequence length="310" mass="32236">MTALSRTPVFDAADTAALLDYPALLATLARTVADYAAGEIVSPERLVVPLQAGGVMLSMPSSAHDLAIHKLVNVCPGNAARGLPTILGQVIACDATTGEMRFVLDGPTVTGRRTAAVTALGVQALHGTPREILLIGTGKQAANHAEAFTALFPDARLHVRGSRAASAAEFCAAHRAHAPQLMPLDGDAIPDAIDVVVTLTTSRTPVYRDAAREGRLVVGVGAFTADAAEIAADTVRRSRLVVDDPAGARHEAGDLIVANVDWQQVASLADVLNGTFARGGPMLFKTVGCAAWDLAACRTARDALAAREQR</sequence>
<dbReference type="EC" id="1.5.1.49" evidence="1"/>
<dbReference type="EMBL" id="CP000869">
    <property type="protein sequence ID" value="ABX17944.1"/>
    <property type="molecule type" value="Genomic_DNA"/>
</dbReference>
<dbReference type="EMBL" id="AP009386">
    <property type="protein sequence ID" value="BAG46100.1"/>
    <property type="molecule type" value="Genomic_DNA"/>
</dbReference>
<dbReference type="RefSeq" id="WP_012217015.1">
    <property type="nucleotide sequence ID" value="NC_010086.1"/>
</dbReference>
<dbReference type="SMR" id="A9AKH1"/>
<dbReference type="STRING" id="395019.BMULJ_04243"/>
<dbReference type="KEGG" id="bmj:BMULJ_04243"/>
<dbReference type="KEGG" id="bmu:Bmul_4263"/>
<dbReference type="eggNOG" id="COG2423">
    <property type="taxonomic scope" value="Bacteria"/>
</dbReference>
<dbReference type="HOGENOM" id="CLU_042088_1_2_4"/>
<dbReference type="SABIO-RK" id="A9AKH1"/>
<dbReference type="Proteomes" id="UP000008815">
    <property type="component" value="Chromosome 2"/>
</dbReference>
<dbReference type="GO" id="GO:0005737">
    <property type="term" value="C:cytoplasm"/>
    <property type="evidence" value="ECO:0007669"/>
    <property type="project" value="TreeGrafter"/>
</dbReference>
<dbReference type="GO" id="GO:0016491">
    <property type="term" value="F:oxidoreductase activity"/>
    <property type="evidence" value="ECO:0007669"/>
    <property type="project" value="UniProtKB-KW"/>
</dbReference>
<dbReference type="Gene3D" id="3.40.50.720">
    <property type="entry name" value="NAD(P)-binding Rossmann-like Domain"/>
    <property type="match status" value="1"/>
</dbReference>
<dbReference type="Gene3D" id="3.30.1780.10">
    <property type="entry name" value="ornithine cyclodeaminase, domain 1"/>
    <property type="match status" value="1"/>
</dbReference>
<dbReference type="InterPro" id="IPR036291">
    <property type="entry name" value="NAD(P)-bd_dom_sf"/>
</dbReference>
<dbReference type="InterPro" id="IPR003462">
    <property type="entry name" value="ODC_Mu_crystall"/>
</dbReference>
<dbReference type="InterPro" id="IPR023401">
    <property type="entry name" value="ODC_N"/>
</dbReference>
<dbReference type="InterPro" id="IPR053444">
    <property type="entry name" value="Pyr2C_reductase-like"/>
</dbReference>
<dbReference type="NCBIfam" id="NF005603">
    <property type="entry name" value="PRK07340.1"/>
    <property type="match status" value="1"/>
</dbReference>
<dbReference type="NCBIfam" id="NF045512">
    <property type="entry name" value="PyrPipCarbRedLhpI"/>
    <property type="match status" value="1"/>
</dbReference>
<dbReference type="PANTHER" id="PTHR13812">
    <property type="entry name" value="KETIMINE REDUCTASE MU-CRYSTALLIN"/>
    <property type="match status" value="1"/>
</dbReference>
<dbReference type="PANTHER" id="PTHR13812:SF19">
    <property type="entry name" value="KETIMINE REDUCTASE MU-CRYSTALLIN"/>
    <property type="match status" value="1"/>
</dbReference>
<dbReference type="Pfam" id="PF02423">
    <property type="entry name" value="OCD_Mu_crystall"/>
    <property type="match status" value="1"/>
</dbReference>
<dbReference type="PIRSF" id="PIRSF001439">
    <property type="entry name" value="CryM"/>
    <property type="match status" value="1"/>
</dbReference>
<dbReference type="SUPFAM" id="SSF51735">
    <property type="entry name" value="NAD(P)-binding Rossmann-fold domains"/>
    <property type="match status" value="1"/>
</dbReference>
<name>PYCR1_BURM1</name>
<reference key="1">
    <citation type="submission" date="2007-10" db="EMBL/GenBank/DDBJ databases">
        <title>Complete sequence of chromosome 2 of Burkholderia multivorans ATCC 17616.</title>
        <authorList>
            <person name="Copeland A."/>
            <person name="Lucas S."/>
            <person name="Lapidus A."/>
            <person name="Barry K."/>
            <person name="Glavina del Rio T."/>
            <person name="Dalin E."/>
            <person name="Tice H."/>
            <person name="Pitluck S."/>
            <person name="Chain P."/>
            <person name="Malfatti S."/>
            <person name="Shin M."/>
            <person name="Vergez L."/>
            <person name="Schmutz J."/>
            <person name="Larimer F."/>
            <person name="Land M."/>
            <person name="Hauser L."/>
            <person name="Kyrpides N."/>
            <person name="Kim E."/>
            <person name="Tiedje J."/>
            <person name="Richardson P."/>
        </authorList>
    </citation>
    <scope>NUCLEOTIDE SEQUENCE [LARGE SCALE GENOMIC DNA]</scope>
    <source>
        <strain>ATCC 17616 / 249</strain>
    </source>
</reference>
<reference key="2">
    <citation type="submission" date="2007-04" db="EMBL/GenBank/DDBJ databases">
        <title>Complete genome sequence of Burkholderia multivorans ATCC 17616.</title>
        <authorList>
            <person name="Ohtsubo Y."/>
            <person name="Yamashita A."/>
            <person name="Kurokawa K."/>
            <person name="Takami H."/>
            <person name="Yuhara S."/>
            <person name="Nishiyama E."/>
            <person name="Endo R."/>
            <person name="Miyazaki R."/>
            <person name="Ono A."/>
            <person name="Yano K."/>
            <person name="Ito M."/>
            <person name="Sota M."/>
            <person name="Yuji N."/>
            <person name="Hattori M."/>
            <person name="Tsuda M."/>
        </authorList>
    </citation>
    <scope>NUCLEOTIDE SEQUENCE [LARGE SCALE GENOMIC DNA]</scope>
    <source>
        <strain>ATCC 17616 / 249</strain>
    </source>
</reference>
<reference key="3">
    <citation type="journal article" date="2014" name="Elife">
        <title>Prediction and characterization of enzymatic activities guided by sequence similarity and genome neighborhood networks.</title>
        <authorList>
            <person name="Zhao S."/>
            <person name="Sakai A."/>
            <person name="Zhang X."/>
            <person name="Vetting M.W."/>
            <person name="Kumar R."/>
            <person name="Hillerich B."/>
            <person name="San Francisco B."/>
            <person name="Solbiati J."/>
            <person name="Steves A."/>
            <person name="Brown S."/>
            <person name="Akiva E."/>
            <person name="Barber A."/>
            <person name="Seidel R.D."/>
            <person name="Babbitt P.C."/>
            <person name="Almo S.C."/>
            <person name="Gerlt J.A."/>
            <person name="Jacobson M.P."/>
        </authorList>
    </citation>
    <scope>FUNCTION</scope>
    <scope>CATALYTIC ACTIVITY</scope>
    <scope>BIOPHYSICOCHEMICAL PROPERTIES</scope>
</reference>
<accession>A9AKH1</accession>
<gene>
    <name evidence="5" type="primary">ocd</name>
    <name evidence="4" type="ordered locus">Bmul_4263</name>
    <name evidence="5" type="ordered locus">BMULJ_04243</name>
</gene>
<evidence type="ECO:0000269" key="1">
    <source>
    </source>
</evidence>
<evidence type="ECO:0000303" key="2">
    <source>
    </source>
</evidence>
<evidence type="ECO:0000305" key="3"/>
<evidence type="ECO:0000312" key="4">
    <source>
        <dbReference type="EMBL" id="ABX17944.1"/>
    </source>
</evidence>
<evidence type="ECO:0000312" key="5">
    <source>
        <dbReference type="EMBL" id="BAG46100.1"/>
    </source>
</evidence>
<proteinExistence type="evidence at protein level"/>
<comment type="function">
    <text evidence="1">Catalyzes the reduction of Delta(1)-pyrroline-2-carboxylate (Pyr2C) to L-proline, using NADPH as the electron donor. May be involved in a degradation pathway that converts trans-3-hydroxy-L-proline (t3LHyp) to L-proline.</text>
</comment>
<comment type="catalytic activity">
    <reaction evidence="1">
        <text>L-proline + NAD(+) = 1-pyrroline-2-carboxylate + NADH + H(+)</text>
        <dbReference type="Rhea" id="RHEA:20321"/>
        <dbReference type="ChEBI" id="CHEBI:15378"/>
        <dbReference type="ChEBI" id="CHEBI:39785"/>
        <dbReference type="ChEBI" id="CHEBI:57540"/>
        <dbReference type="ChEBI" id="CHEBI:57945"/>
        <dbReference type="ChEBI" id="CHEBI:60039"/>
        <dbReference type="EC" id="1.5.1.49"/>
    </reaction>
</comment>
<comment type="catalytic activity">
    <reaction evidence="1">
        <text>L-proline + NADP(+) = 1-pyrroline-2-carboxylate + NADPH + H(+)</text>
        <dbReference type="Rhea" id="RHEA:20317"/>
        <dbReference type="ChEBI" id="CHEBI:15378"/>
        <dbReference type="ChEBI" id="CHEBI:39785"/>
        <dbReference type="ChEBI" id="CHEBI:57783"/>
        <dbReference type="ChEBI" id="CHEBI:58349"/>
        <dbReference type="ChEBI" id="CHEBI:60039"/>
        <dbReference type="EC" id="1.5.1.49"/>
    </reaction>
</comment>
<comment type="biophysicochemical properties">
    <kinetics>
        <KM evidence="1">4 mM for Delta(1)-pyrroline-2-carboxylate (using NADPH as cosubstrate)</KM>
        <text evidence="1">kcat is 25 sec(-1) for Pyr2C reduction using NADPH.</text>
    </kinetics>
</comment>
<comment type="similarity">
    <text evidence="3">Belongs to the ornithine cyclodeaminase/mu-crystallin family.</text>
</comment>